<dbReference type="EC" id="2.7.7.68" evidence="1"/>
<dbReference type="EMBL" id="AE000782">
    <property type="protein sequence ID" value="AAB89190.1"/>
    <property type="molecule type" value="Genomic_DNA"/>
</dbReference>
<dbReference type="PIR" id="D69507">
    <property type="entry name" value="D69507"/>
</dbReference>
<dbReference type="RefSeq" id="WP_010879553.1">
    <property type="nucleotide sequence ID" value="NC_000917.1"/>
</dbReference>
<dbReference type="SMR" id="O28218"/>
<dbReference type="STRING" id="224325.AF_2061"/>
<dbReference type="PaxDb" id="224325-AF_2061"/>
<dbReference type="EnsemblBacteria" id="AAB89190">
    <property type="protein sequence ID" value="AAB89190"/>
    <property type="gene ID" value="AF_2061"/>
</dbReference>
<dbReference type="GeneID" id="24795810"/>
<dbReference type="KEGG" id="afu:AF_2061"/>
<dbReference type="eggNOG" id="arCOG04472">
    <property type="taxonomic scope" value="Archaea"/>
</dbReference>
<dbReference type="HOGENOM" id="CLU_076569_2_0_2"/>
<dbReference type="OrthoDB" id="11179at2157"/>
<dbReference type="PhylomeDB" id="O28218"/>
<dbReference type="UniPathway" id="UPA00071"/>
<dbReference type="Proteomes" id="UP000002199">
    <property type="component" value="Chromosome"/>
</dbReference>
<dbReference type="GO" id="GO:0005525">
    <property type="term" value="F:GTP binding"/>
    <property type="evidence" value="ECO:0007669"/>
    <property type="project" value="UniProtKB-KW"/>
</dbReference>
<dbReference type="GO" id="GO:0043814">
    <property type="term" value="F:phospholactate guanylyltransferase activity"/>
    <property type="evidence" value="ECO:0007669"/>
    <property type="project" value="UniProtKB-EC"/>
</dbReference>
<dbReference type="GO" id="GO:0052645">
    <property type="term" value="P:F420-0 metabolic process"/>
    <property type="evidence" value="ECO:0007669"/>
    <property type="project" value="UniProtKB-UniRule"/>
</dbReference>
<dbReference type="Gene3D" id="6.10.140.50">
    <property type="match status" value="1"/>
</dbReference>
<dbReference type="Gene3D" id="3.90.550.10">
    <property type="entry name" value="Spore Coat Polysaccharide Biosynthesis Protein SpsA, Chain A"/>
    <property type="match status" value="1"/>
</dbReference>
<dbReference type="HAMAP" id="MF_02114">
    <property type="entry name" value="CofC"/>
    <property type="match status" value="1"/>
</dbReference>
<dbReference type="InterPro" id="IPR002835">
    <property type="entry name" value="CofC"/>
</dbReference>
<dbReference type="InterPro" id="IPR029044">
    <property type="entry name" value="Nucleotide-diphossugar_trans"/>
</dbReference>
<dbReference type="NCBIfam" id="TIGR03552">
    <property type="entry name" value="F420_cofC"/>
    <property type="match status" value="1"/>
</dbReference>
<dbReference type="PANTHER" id="PTHR40392">
    <property type="entry name" value="2-PHOSPHO-L-LACTATE GUANYLYLTRANSFERASE"/>
    <property type="match status" value="1"/>
</dbReference>
<dbReference type="PANTHER" id="PTHR40392:SF1">
    <property type="entry name" value="2-PHOSPHO-L-LACTATE GUANYLYLTRANSFERASE"/>
    <property type="match status" value="1"/>
</dbReference>
<dbReference type="Pfam" id="PF01983">
    <property type="entry name" value="CofC"/>
    <property type="match status" value="1"/>
</dbReference>
<dbReference type="SUPFAM" id="SSF53448">
    <property type="entry name" value="Nucleotide-diphospho-sugar transferases"/>
    <property type="match status" value="1"/>
</dbReference>
<keyword id="KW-0342">GTP-binding</keyword>
<keyword id="KW-0547">Nucleotide-binding</keyword>
<keyword id="KW-0548">Nucleotidyltransferase</keyword>
<keyword id="KW-1185">Reference proteome</keyword>
<keyword id="KW-0808">Transferase</keyword>
<gene>
    <name evidence="1" type="primary">cofC</name>
    <name type="ordered locus">AF_2061</name>
</gene>
<name>COFC_ARCFU</name>
<protein>
    <recommendedName>
        <fullName evidence="1">2-phospho-L-lactate guanylyltransferase</fullName>
        <shortName evidence="1">LP guanylyltransferase</shortName>
        <ecNumber evidence="1">2.7.7.68</ecNumber>
    </recommendedName>
</protein>
<comment type="function">
    <text evidence="1">Guanylyltransferase that catalyzes the activation of (2S)-2-phospholactate (2-PL) as (2S)-lactyl-2-diphospho-5'-guanosine, via the condensation of 2-PL with GTP. It is involved in the biosynthesis of coenzyme F420, a hydride carrier cofactor.</text>
</comment>
<comment type="catalytic activity">
    <reaction evidence="1">
        <text>(2S)-2-phospholactate + GTP + H(+) = (2S)-lactyl-2-diphospho-5'-guanosine + diphosphate</text>
        <dbReference type="Rhea" id="RHEA:63424"/>
        <dbReference type="ChEBI" id="CHEBI:15378"/>
        <dbReference type="ChEBI" id="CHEBI:33019"/>
        <dbReference type="ChEBI" id="CHEBI:37565"/>
        <dbReference type="ChEBI" id="CHEBI:59435"/>
        <dbReference type="ChEBI" id="CHEBI:59906"/>
        <dbReference type="EC" id="2.7.7.68"/>
    </reaction>
</comment>
<comment type="pathway">
    <text evidence="1">Cofactor biosynthesis; coenzyme F420 biosynthesis.</text>
</comment>
<comment type="subunit">
    <text evidence="1">Homodimer.</text>
</comment>
<comment type="similarity">
    <text evidence="1">Belongs to the CofC family.</text>
</comment>
<reference key="1">
    <citation type="journal article" date="1997" name="Nature">
        <title>The complete genome sequence of the hyperthermophilic, sulphate-reducing archaeon Archaeoglobus fulgidus.</title>
        <authorList>
            <person name="Klenk H.-P."/>
            <person name="Clayton R.A."/>
            <person name="Tomb J.-F."/>
            <person name="White O."/>
            <person name="Nelson K.E."/>
            <person name="Ketchum K.A."/>
            <person name="Dodson R.J."/>
            <person name="Gwinn M.L."/>
            <person name="Hickey E.K."/>
            <person name="Peterson J.D."/>
            <person name="Richardson D.L."/>
            <person name="Kerlavage A.R."/>
            <person name="Graham D.E."/>
            <person name="Kyrpides N.C."/>
            <person name="Fleischmann R.D."/>
            <person name="Quackenbush J."/>
            <person name="Lee N.H."/>
            <person name="Sutton G.G."/>
            <person name="Gill S.R."/>
            <person name="Kirkness E.F."/>
            <person name="Dougherty B.A."/>
            <person name="McKenney K."/>
            <person name="Adams M.D."/>
            <person name="Loftus B.J."/>
            <person name="Peterson S.N."/>
            <person name="Reich C.I."/>
            <person name="McNeil L.K."/>
            <person name="Badger J.H."/>
            <person name="Glodek A."/>
            <person name="Zhou L."/>
            <person name="Overbeek R."/>
            <person name="Gocayne J.D."/>
            <person name="Weidman J.F."/>
            <person name="McDonald L.A."/>
            <person name="Utterback T.R."/>
            <person name="Cotton M.D."/>
            <person name="Spriggs T."/>
            <person name="Artiach P."/>
            <person name="Kaine B.P."/>
            <person name="Sykes S.M."/>
            <person name="Sadow P.W."/>
            <person name="D'Andrea K.P."/>
            <person name="Bowman C."/>
            <person name="Fujii C."/>
            <person name="Garland S.A."/>
            <person name="Mason T.M."/>
            <person name="Olsen G.J."/>
            <person name="Fraser C.M."/>
            <person name="Smith H.O."/>
            <person name="Woese C.R."/>
            <person name="Venter J.C."/>
        </authorList>
    </citation>
    <scope>NUCLEOTIDE SEQUENCE [LARGE SCALE GENOMIC DNA]</scope>
    <source>
        <strain>ATCC 49558 / DSM 4304 / JCM 9628 / NBRC 100126 / VC-16</strain>
    </source>
</reference>
<accession>O28218</accession>
<feature type="chain" id="PRO_0000398722" description="2-phospho-L-lactate guanylyltransferase">
    <location>
        <begin position="1"/>
        <end position="206"/>
    </location>
</feature>
<sequence>MRILIPFKANNPKSRLSSILSEEERKELARLMLLDVIDAAKPFGEIKVVCPSELDVEGVEVVVDTSDLNTTVNKVMDEAPLAVIMSDLPLLSEEVLKRFFETEGDVVVAPGRKGGTNMLLVRKRGFRVSYHFGSFFKHLEMARKMGMKAKIFDSFYSSVDIDDESDLLELMMHGSGKKSYEFLRKIGFSVSFEETPRLERRVFMQP</sequence>
<evidence type="ECO:0000255" key="1">
    <source>
        <dbReference type="HAMAP-Rule" id="MF_02114"/>
    </source>
</evidence>
<proteinExistence type="inferred from homology"/>
<organism>
    <name type="scientific">Archaeoglobus fulgidus (strain ATCC 49558 / DSM 4304 / JCM 9628 / NBRC 100126 / VC-16)</name>
    <dbReference type="NCBI Taxonomy" id="224325"/>
    <lineage>
        <taxon>Archaea</taxon>
        <taxon>Methanobacteriati</taxon>
        <taxon>Methanobacteriota</taxon>
        <taxon>Archaeoglobi</taxon>
        <taxon>Archaeoglobales</taxon>
        <taxon>Archaeoglobaceae</taxon>
        <taxon>Archaeoglobus</taxon>
    </lineage>
</organism>